<reference key="1">
    <citation type="submission" date="2008-02" db="EMBL/GenBank/DDBJ databases">
        <title>Complete sequence of Escherichia coli C str. ATCC 8739.</title>
        <authorList>
            <person name="Copeland A."/>
            <person name="Lucas S."/>
            <person name="Lapidus A."/>
            <person name="Glavina del Rio T."/>
            <person name="Dalin E."/>
            <person name="Tice H."/>
            <person name="Bruce D."/>
            <person name="Goodwin L."/>
            <person name="Pitluck S."/>
            <person name="Kiss H."/>
            <person name="Brettin T."/>
            <person name="Detter J.C."/>
            <person name="Han C."/>
            <person name="Kuske C.R."/>
            <person name="Schmutz J."/>
            <person name="Larimer F."/>
            <person name="Land M."/>
            <person name="Hauser L."/>
            <person name="Kyrpides N."/>
            <person name="Mikhailova N."/>
            <person name="Ingram L."/>
            <person name="Richardson P."/>
        </authorList>
    </citation>
    <scope>NUCLEOTIDE SEQUENCE [LARGE SCALE GENOMIC DNA]</scope>
    <source>
        <strain>ATCC 8739 / DSM 1576 / NBRC 3972 / NCIMB 8545 / WDCM 00012 / Crooks</strain>
    </source>
</reference>
<organism>
    <name type="scientific">Escherichia coli (strain ATCC 8739 / DSM 1576 / NBRC 3972 / NCIMB 8545 / WDCM 00012 / Crooks)</name>
    <dbReference type="NCBI Taxonomy" id="481805"/>
    <lineage>
        <taxon>Bacteria</taxon>
        <taxon>Pseudomonadati</taxon>
        <taxon>Pseudomonadota</taxon>
        <taxon>Gammaproteobacteria</taxon>
        <taxon>Enterobacterales</taxon>
        <taxon>Enterobacteriaceae</taxon>
        <taxon>Escherichia</taxon>
    </lineage>
</organism>
<dbReference type="EMBL" id="CP000946">
    <property type="protein sequence ID" value="ACA77612.1"/>
    <property type="molecule type" value="Genomic_DNA"/>
</dbReference>
<dbReference type="RefSeq" id="WP_001174962.1">
    <property type="nucleotide sequence ID" value="NZ_MTFT01000006.1"/>
</dbReference>
<dbReference type="SMR" id="B1IQ91"/>
<dbReference type="KEGG" id="ecl:EcolC_1966"/>
<dbReference type="HOGENOM" id="CLU_012893_6_0_6"/>
<dbReference type="GO" id="GO:0005886">
    <property type="term" value="C:plasma membrane"/>
    <property type="evidence" value="ECO:0007669"/>
    <property type="project" value="UniProtKB-SubCell"/>
</dbReference>
<dbReference type="GO" id="GO:0015297">
    <property type="term" value="F:antiporter activity"/>
    <property type="evidence" value="ECO:0007669"/>
    <property type="project" value="UniProtKB-UniRule"/>
</dbReference>
<dbReference type="GO" id="GO:0042910">
    <property type="term" value="F:xenobiotic transmembrane transporter activity"/>
    <property type="evidence" value="ECO:0007669"/>
    <property type="project" value="UniProtKB-UniRule"/>
</dbReference>
<dbReference type="GO" id="GO:0006814">
    <property type="term" value="P:sodium ion transport"/>
    <property type="evidence" value="ECO:0007669"/>
    <property type="project" value="UniProtKB-UniRule"/>
</dbReference>
<dbReference type="GO" id="GO:0006855">
    <property type="term" value="P:xenobiotic transmembrane transport"/>
    <property type="evidence" value="ECO:0007669"/>
    <property type="project" value="UniProtKB-UniRule"/>
</dbReference>
<dbReference type="CDD" id="cd13131">
    <property type="entry name" value="MATE_NorM_like"/>
    <property type="match status" value="1"/>
</dbReference>
<dbReference type="HAMAP" id="MF_00400">
    <property type="entry name" value="MdtK"/>
    <property type="match status" value="1"/>
</dbReference>
<dbReference type="InterPro" id="IPR002528">
    <property type="entry name" value="MATE_fam"/>
</dbReference>
<dbReference type="InterPro" id="IPR050222">
    <property type="entry name" value="MATE_MdtK"/>
</dbReference>
<dbReference type="InterPro" id="IPR048279">
    <property type="entry name" value="MdtK-like"/>
</dbReference>
<dbReference type="InterPro" id="IPR022913">
    <property type="entry name" value="Multidrug-R_MdtK"/>
</dbReference>
<dbReference type="NCBIfam" id="TIGR00797">
    <property type="entry name" value="matE"/>
    <property type="match status" value="1"/>
</dbReference>
<dbReference type="PANTHER" id="PTHR43298:SF2">
    <property type="entry name" value="FMN_FAD EXPORTER YEEO-RELATED"/>
    <property type="match status" value="1"/>
</dbReference>
<dbReference type="PANTHER" id="PTHR43298">
    <property type="entry name" value="MULTIDRUG RESISTANCE PROTEIN NORM-RELATED"/>
    <property type="match status" value="1"/>
</dbReference>
<dbReference type="Pfam" id="PF01554">
    <property type="entry name" value="MatE"/>
    <property type="match status" value="2"/>
</dbReference>
<dbReference type="PIRSF" id="PIRSF006603">
    <property type="entry name" value="DinF"/>
    <property type="match status" value="1"/>
</dbReference>
<protein>
    <recommendedName>
        <fullName evidence="1">Multidrug resistance protein MdtK</fullName>
    </recommendedName>
    <alternativeName>
        <fullName evidence="1">Multidrug-efflux transporter</fullName>
    </alternativeName>
</protein>
<accession>B1IQ91</accession>
<name>MDTK_ECOLC</name>
<feature type="chain" id="PRO_1000080330" description="Multidrug resistance protein MdtK">
    <location>
        <begin position="1"/>
        <end position="457"/>
    </location>
</feature>
<feature type="transmembrane region" description="Helical" evidence="1">
    <location>
        <begin position="11"/>
        <end position="31"/>
    </location>
</feature>
<feature type="transmembrane region" description="Helical" evidence="1">
    <location>
        <begin position="53"/>
        <end position="73"/>
    </location>
</feature>
<feature type="transmembrane region" description="Helical" evidence="1">
    <location>
        <begin position="93"/>
        <end position="113"/>
    </location>
</feature>
<feature type="transmembrane region" description="Helical" evidence="1">
    <location>
        <begin position="127"/>
        <end position="147"/>
    </location>
</feature>
<feature type="transmembrane region" description="Helical" evidence="1">
    <location>
        <begin position="160"/>
        <end position="180"/>
    </location>
</feature>
<feature type="transmembrane region" description="Helical" evidence="1">
    <location>
        <begin position="189"/>
        <end position="209"/>
    </location>
</feature>
<feature type="transmembrane region" description="Helical" evidence="1">
    <location>
        <begin position="243"/>
        <end position="263"/>
    </location>
</feature>
<feature type="transmembrane region" description="Helical" evidence="1">
    <location>
        <begin position="276"/>
        <end position="296"/>
    </location>
</feature>
<feature type="transmembrane region" description="Helical" evidence="1">
    <location>
        <begin position="314"/>
        <end position="334"/>
    </location>
</feature>
<feature type="transmembrane region" description="Helical" evidence="1">
    <location>
        <begin position="350"/>
        <end position="370"/>
    </location>
</feature>
<feature type="transmembrane region" description="Helical" evidence="1">
    <location>
        <begin position="387"/>
        <end position="407"/>
    </location>
</feature>
<feature type="transmembrane region" description="Helical" evidence="1">
    <location>
        <begin position="418"/>
        <end position="438"/>
    </location>
</feature>
<sequence>MQKYISEARLLLALAIPVILAQIAQTAMGFVDTVMAGGYSATDMAAVAIGTSIWLPAILFGHGLLLALTPVIAQLNGSGRRERIAHQVRQGFWLAGFVSVLIMLVLWNAGYIIRSMENIDPALAEKAVGYLRALLWGAPGYLFFQVARNQCEGLAKTKPGMVMGFIGLLVNIPVNYIFIYGHFGMPELGGVGCGVATAAVYWVMFLAMVSYIKRARSMRDIRNEKGTAKPDPAVMKRLIQLGLPIALALFFEVTLFAVVALLVSPLGIVDVAGHQIALNFSSLMFVLPMSLAAAVTIRVGYRLGQGSTLDAQTAARTGLMVGVCMATLTAIFTVSLREQIALLYNDNPEVVTLAAHLMLLAAVYQISDSIQVIGSGILRGYKDTRSIFYITFTAYWVLGLPSGYILALTDLVVEPMGPAGFWIGFIIGLTSAAIMMMLRMRFLQRMPSAIILQRASR</sequence>
<proteinExistence type="inferred from homology"/>
<keyword id="KW-0050">Antiport</keyword>
<keyword id="KW-0997">Cell inner membrane</keyword>
<keyword id="KW-1003">Cell membrane</keyword>
<keyword id="KW-0406">Ion transport</keyword>
<keyword id="KW-0472">Membrane</keyword>
<keyword id="KW-0915">Sodium</keyword>
<keyword id="KW-0739">Sodium transport</keyword>
<keyword id="KW-0812">Transmembrane</keyword>
<keyword id="KW-1133">Transmembrane helix</keyword>
<keyword id="KW-0813">Transport</keyword>
<gene>
    <name evidence="1" type="primary">mdtK</name>
    <name type="ordered locus">EcolC_1966</name>
</gene>
<evidence type="ECO:0000255" key="1">
    <source>
        <dbReference type="HAMAP-Rule" id="MF_00400"/>
    </source>
</evidence>
<comment type="function">
    <text evidence="1">Multidrug efflux pump that functions probably as a Na(+)/drug antiporter.</text>
</comment>
<comment type="subcellular location">
    <subcellularLocation>
        <location evidence="1">Cell inner membrane</location>
        <topology evidence="1">Multi-pass membrane protein</topology>
    </subcellularLocation>
</comment>
<comment type="similarity">
    <text evidence="1">Belongs to the multi antimicrobial extrusion (MATE) (TC 2.A.66.1) family. MdtK subfamily.</text>
</comment>